<proteinExistence type="inferred from homology"/>
<accession>B5RH08</accession>
<name>RS7_SALG2</name>
<keyword id="KW-0687">Ribonucleoprotein</keyword>
<keyword id="KW-0689">Ribosomal protein</keyword>
<keyword id="KW-0694">RNA-binding</keyword>
<keyword id="KW-0699">rRNA-binding</keyword>
<keyword id="KW-0820">tRNA-binding</keyword>
<gene>
    <name evidence="1" type="primary">rpsG</name>
    <name type="ordered locus">SG3992</name>
</gene>
<evidence type="ECO:0000255" key="1">
    <source>
        <dbReference type="HAMAP-Rule" id="MF_00480"/>
    </source>
</evidence>
<evidence type="ECO:0000305" key="2"/>
<reference key="1">
    <citation type="journal article" date="2008" name="Genome Res.">
        <title>Comparative genome analysis of Salmonella enteritidis PT4 and Salmonella gallinarum 287/91 provides insights into evolutionary and host adaptation pathways.</title>
        <authorList>
            <person name="Thomson N.R."/>
            <person name="Clayton D.J."/>
            <person name="Windhorst D."/>
            <person name="Vernikos G."/>
            <person name="Davidson S."/>
            <person name="Churcher C."/>
            <person name="Quail M.A."/>
            <person name="Stevens M."/>
            <person name="Jones M.A."/>
            <person name="Watson M."/>
            <person name="Barron A."/>
            <person name="Layton A."/>
            <person name="Pickard D."/>
            <person name="Kingsley R.A."/>
            <person name="Bignell A."/>
            <person name="Clark L."/>
            <person name="Harris B."/>
            <person name="Ormond D."/>
            <person name="Abdellah Z."/>
            <person name="Brooks K."/>
            <person name="Cherevach I."/>
            <person name="Chillingworth T."/>
            <person name="Woodward J."/>
            <person name="Norberczak H."/>
            <person name="Lord A."/>
            <person name="Arrowsmith C."/>
            <person name="Jagels K."/>
            <person name="Moule S."/>
            <person name="Mungall K."/>
            <person name="Saunders M."/>
            <person name="Whitehead S."/>
            <person name="Chabalgoity J.A."/>
            <person name="Maskell D."/>
            <person name="Humphreys T."/>
            <person name="Roberts M."/>
            <person name="Barrow P.A."/>
            <person name="Dougan G."/>
            <person name="Parkhill J."/>
        </authorList>
    </citation>
    <scope>NUCLEOTIDE SEQUENCE [LARGE SCALE GENOMIC DNA]</scope>
    <source>
        <strain>287/91 / NCTC 13346</strain>
    </source>
</reference>
<comment type="function">
    <text evidence="1">One of the primary rRNA binding proteins, it binds directly to 16S rRNA where it nucleates assembly of the head domain of the 30S subunit. Is located at the subunit interface close to the decoding center, probably blocks exit of the E-site tRNA.</text>
</comment>
<comment type="subunit">
    <text evidence="1">Part of the 30S ribosomal subunit. Contacts proteins S9 and S11.</text>
</comment>
<comment type="similarity">
    <text evidence="1">Belongs to the universal ribosomal protein uS7 family.</text>
</comment>
<feature type="chain" id="PRO_1000125996" description="Small ribosomal subunit protein uS7">
    <location>
        <begin position="1"/>
        <end position="156"/>
    </location>
</feature>
<dbReference type="EMBL" id="AM933173">
    <property type="protein sequence ID" value="CAR39762.1"/>
    <property type="molecule type" value="Genomic_DNA"/>
</dbReference>
<dbReference type="RefSeq" id="WP_001138043.1">
    <property type="nucleotide sequence ID" value="NC_011274.1"/>
</dbReference>
<dbReference type="SMR" id="B5RH08"/>
<dbReference type="GeneID" id="93778657"/>
<dbReference type="KEGG" id="seg:SG3992"/>
<dbReference type="HOGENOM" id="CLU_072226_1_1_6"/>
<dbReference type="Proteomes" id="UP000008321">
    <property type="component" value="Chromosome"/>
</dbReference>
<dbReference type="GO" id="GO:0015935">
    <property type="term" value="C:small ribosomal subunit"/>
    <property type="evidence" value="ECO:0007669"/>
    <property type="project" value="InterPro"/>
</dbReference>
<dbReference type="GO" id="GO:0019843">
    <property type="term" value="F:rRNA binding"/>
    <property type="evidence" value="ECO:0007669"/>
    <property type="project" value="UniProtKB-UniRule"/>
</dbReference>
<dbReference type="GO" id="GO:0003735">
    <property type="term" value="F:structural constituent of ribosome"/>
    <property type="evidence" value="ECO:0007669"/>
    <property type="project" value="InterPro"/>
</dbReference>
<dbReference type="GO" id="GO:0000049">
    <property type="term" value="F:tRNA binding"/>
    <property type="evidence" value="ECO:0007669"/>
    <property type="project" value="UniProtKB-UniRule"/>
</dbReference>
<dbReference type="GO" id="GO:0006412">
    <property type="term" value="P:translation"/>
    <property type="evidence" value="ECO:0007669"/>
    <property type="project" value="UniProtKB-UniRule"/>
</dbReference>
<dbReference type="CDD" id="cd14869">
    <property type="entry name" value="uS7_Bacteria"/>
    <property type="match status" value="1"/>
</dbReference>
<dbReference type="FunFam" id="1.10.455.10:FF:000001">
    <property type="entry name" value="30S ribosomal protein S7"/>
    <property type="match status" value="1"/>
</dbReference>
<dbReference type="Gene3D" id="1.10.455.10">
    <property type="entry name" value="Ribosomal protein S7 domain"/>
    <property type="match status" value="1"/>
</dbReference>
<dbReference type="HAMAP" id="MF_00480_B">
    <property type="entry name" value="Ribosomal_uS7_B"/>
    <property type="match status" value="1"/>
</dbReference>
<dbReference type="InterPro" id="IPR000235">
    <property type="entry name" value="Ribosomal_uS7"/>
</dbReference>
<dbReference type="InterPro" id="IPR005717">
    <property type="entry name" value="Ribosomal_uS7_bac/org-type"/>
</dbReference>
<dbReference type="InterPro" id="IPR020606">
    <property type="entry name" value="Ribosomal_uS7_CS"/>
</dbReference>
<dbReference type="InterPro" id="IPR023798">
    <property type="entry name" value="Ribosomal_uS7_dom"/>
</dbReference>
<dbReference type="InterPro" id="IPR036823">
    <property type="entry name" value="Ribosomal_uS7_dom_sf"/>
</dbReference>
<dbReference type="NCBIfam" id="TIGR01029">
    <property type="entry name" value="rpsG_bact"/>
    <property type="match status" value="1"/>
</dbReference>
<dbReference type="PANTHER" id="PTHR11205">
    <property type="entry name" value="RIBOSOMAL PROTEIN S7"/>
    <property type="match status" value="1"/>
</dbReference>
<dbReference type="Pfam" id="PF00177">
    <property type="entry name" value="Ribosomal_S7"/>
    <property type="match status" value="1"/>
</dbReference>
<dbReference type="PIRSF" id="PIRSF002122">
    <property type="entry name" value="RPS7p_RPS7a_RPS5e_RPS7o"/>
    <property type="match status" value="1"/>
</dbReference>
<dbReference type="SUPFAM" id="SSF47973">
    <property type="entry name" value="Ribosomal protein S7"/>
    <property type="match status" value="1"/>
</dbReference>
<dbReference type="PROSITE" id="PS00052">
    <property type="entry name" value="RIBOSOMAL_S7"/>
    <property type="match status" value="1"/>
</dbReference>
<protein>
    <recommendedName>
        <fullName evidence="1">Small ribosomal subunit protein uS7</fullName>
    </recommendedName>
    <alternativeName>
        <fullName evidence="2">30S ribosomal protein S7</fullName>
    </alternativeName>
</protein>
<organism>
    <name type="scientific">Salmonella gallinarum (strain 287/91 / NCTC 13346)</name>
    <dbReference type="NCBI Taxonomy" id="550538"/>
    <lineage>
        <taxon>Bacteria</taxon>
        <taxon>Pseudomonadati</taxon>
        <taxon>Pseudomonadota</taxon>
        <taxon>Gammaproteobacteria</taxon>
        <taxon>Enterobacterales</taxon>
        <taxon>Enterobacteriaceae</taxon>
        <taxon>Salmonella</taxon>
    </lineage>
</organism>
<sequence length="156" mass="17604">MPRRRVIGQRKILPDPKFGSELLAKFVNILMVDGKKSTAESIVYSALETLAQRSGKSELEAFEVALENVRPTVEVKSRRVGGSTYQVPVEVRPVRRNALAMRWIVEAARKRGDKSMALRLANELSDAAENKGTAVKKREDVHRMAEANKAFAHYRW</sequence>